<sequence length="289" mass="32780">MNMPLHQISAIPSQDATSARVYRSKTKEKEREEQNEKTLGHSMSHSSNISKAGGSSVASAPVSSFPRTSVTPSNQDICRICHCEGDDESPLITPCRCTGSLHFVHQTCLQQWIKSSDTRCCELCKYEFIMETKLKPLRKWEKLQMTSSERRKIMCSVTFHVIAITCVVWSLYVLIDRTAEEIRQGQATGILEWPFWTKLVVVAIGFTGGLLFMYVQCKVYVQLWRRLKAYNRVIYVQNCPETSKRNIFEKPALPEPNFESKDGRGVCHSDTNSSCCTEPEDTGAEIIHV</sequence>
<gene>
    <name type="primary">MARCHF8</name>
    <name type="synonym">MARCH8</name>
</gene>
<protein>
    <recommendedName>
        <fullName>E3 ubiquitin-protein ligase MARCHF8</fullName>
        <ecNumber>2.3.2.27</ecNumber>
    </recommendedName>
    <alternativeName>
        <fullName>Membrane-associated RING finger protein 8</fullName>
    </alternativeName>
    <alternativeName>
        <fullName>Membrane-associated RING-CH protein VIII</fullName>
        <shortName>MARCH-VIII</shortName>
    </alternativeName>
    <alternativeName>
        <fullName evidence="5">RING-type E3 ubiquitin transferase MARCHF8</fullName>
    </alternativeName>
</protein>
<dbReference type="EC" id="2.3.2.27"/>
<dbReference type="EMBL" id="BC119819">
    <property type="protein sequence ID" value="AAI19820.1"/>
    <property type="molecule type" value="mRNA"/>
</dbReference>
<dbReference type="RefSeq" id="NP_001069700.1">
    <property type="nucleotide sequence ID" value="NM_001076232.1"/>
</dbReference>
<dbReference type="SMR" id="Q0VD59"/>
<dbReference type="FunCoup" id="Q0VD59">
    <property type="interactions" value="2464"/>
</dbReference>
<dbReference type="STRING" id="9913.ENSBTAP00000059358"/>
<dbReference type="PaxDb" id="9913-ENSBTAP00000039686"/>
<dbReference type="GeneID" id="540667"/>
<dbReference type="KEGG" id="bta:540667"/>
<dbReference type="CTD" id="220972"/>
<dbReference type="VEuPathDB" id="HostDB:ENSBTAG00000019537"/>
<dbReference type="eggNOG" id="KOG1609">
    <property type="taxonomic scope" value="Eukaryota"/>
</dbReference>
<dbReference type="HOGENOM" id="CLU_070599_0_1_1"/>
<dbReference type="InParanoid" id="Q0VD59"/>
<dbReference type="OMA" id="SCCRMKL"/>
<dbReference type="TreeFam" id="TF319557"/>
<dbReference type="UniPathway" id="UPA00143"/>
<dbReference type="Proteomes" id="UP000009136">
    <property type="component" value="Chromosome 28"/>
</dbReference>
<dbReference type="Bgee" id="ENSBTAG00000019537">
    <property type="expression patterns" value="Expressed in floor plate of diencephalon and 104 other cell types or tissues"/>
</dbReference>
<dbReference type="GO" id="GO:0005737">
    <property type="term" value="C:cytoplasm"/>
    <property type="evidence" value="ECO:0000318"/>
    <property type="project" value="GO_Central"/>
</dbReference>
<dbReference type="GO" id="GO:0031901">
    <property type="term" value="C:early endosome membrane"/>
    <property type="evidence" value="ECO:0000318"/>
    <property type="project" value="GO_Central"/>
</dbReference>
<dbReference type="GO" id="GO:0005789">
    <property type="term" value="C:endoplasmic reticulum membrane"/>
    <property type="evidence" value="ECO:0007669"/>
    <property type="project" value="UniProtKB-SubCell"/>
</dbReference>
<dbReference type="GO" id="GO:0005768">
    <property type="term" value="C:endosome"/>
    <property type="evidence" value="ECO:0000250"/>
    <property type="project" value="UniProtKB"/>
</dbReference>
<dbReference type="GO" id="GO:0000139">
    <property type="term" value="C:Golgi membrane"/>
    <property type="evidence" value="ECO:0007669"/>
    <property type="project" value="UniProtKB-SubCell"/>
</dbReference>
<dbReference type="GO" id="GO:0031902">
    <property type="term" value="C:late endosome membrane"/>
    <property type="evidence" value="ECO:0000318"/>
    <property type="project" value="GO_Central"/>
</dbReference>
<dbReference type="GO" id="GO:0005765">
    <property type="term" value="C:lysosomal membrane"/>
    <property type="evidence" value="ECO:0007669"/>
    <property type="project" value="UniProtKB-SubCell"/>
</dbReference>
<dbReference type="GO" id="GO:0005764">
    <property type="term" value="C:lysosome"/>
    <property type="evidence" value="ECO:0000250"/>
    <property type="project" value="UniProtKB"/>
</dbReference>
<dbReference type="GO" id="GO:0042287">
    <property type="term" value="F:MHC protein binding"/>
    <property type="evidence" value="ECO:0000318"/>
    <property type="project" value="GO_Central"/>
</dbReference>
<dbReference type="GO" id="GO:0061630">
    <property type="term" value="F:ubiquitin protein ligase activity"/>
    <property type="evidence" value="ECO:0000318"/>
    <property type="project" value="GO_Central"/>
</dbReference>
<dbReference type="GO" id="GO:0004842">
    <property type="term" value="F:ubiquitin-protein transferase activity"/>
    <property type="evidence" value="ECO:0000250"/>
    <property type="project" value="UniProtKB"/>
</dbReference>
<dbReference type="GO" id="GO:0008270">
    <property type="term" value="F:zinc ion binding"/>
    <property type="evidence" value="ECO:0007669"/>
    <property type="project" value="UniProtKB-KW"/>
</dbReference>
<dbReference type="GO" id="GO:0002250">
    <property type="term" value="P:adaptive immune response"/>
    <property type="evidence" value="ECO:0007669"/>
    <property type="project" value="UniProtKB-KW"/>
</dbReference>
<dbReference type="GO" id="GO:0002495">
    <property type="term" value="P:antigen processing and presentation of peptide antigen via MHC class II"/>
    <property type="evidence" value="ECO:0000318"/>
    <property type="project" value="GO_Central"/>
</dbReference>
<dbReference type="GO" id="GO:0006955">
    <property type="term" value="P:immune response"/>
    <property type="evidence" value="ECO:0000318"/>
    <property type="project" value="GO_Central"/>
</dbReference>
<dbReference type="GO" id="GO:0000209">
    <property type="term" value="P:protein polyubiquitination"/>
    <property type="evidence" value="ECO:0000318"/>
    <property type="project" value="GO_Central"/>
</dbReference>
<dbReference type="CDD" id="cd16807">
    <property type="entry name" value="RING_CH-C4HC3_MARCH8"/>
    <property type="match status" value="1"/>
</dbReference>
<dbReference type="FunFam" id="3.30.40.10:FF:000043">
    <property type="entry name" value="Putative e3 ubiquitin-protein ligase march8"/>
    <property type="match status" value="1"/>
</dbReference>
<dbReference type="Gene3D" id="3.30.40.10">
    <property type="entry name" value="Zinc/RING finger domain, C3HC4 (zinc finger)"/>
    <property type="match status" value="1"/>
</dbReference>
<dbReference type="InterPro" id="IPR001841">
    <property type="entry name" value="Znf_RING"/>
</dbReference>
<dbReference type="InterPro" id="IPR011016">
    <property type="entry name" value="Znf_RING-CH"/>
</dbReference>
<dbReference type="InterPro" id="IPR013083">
    <property type="entry name" value="Znf_RING/FYVE/PHD"/>
</dbReference>
<dbReference type="PANTHER" id="PTHR45981">
    <property type="entry name" value="LD02310P"/>
    <property type="match status" value="1"/>
</dbReference>
<dbReference type="Pfam" id="PF12906">
    <property type="entry name" value="RINGv"/>
    <property type="match status" value="1"/>
</dbReference>
<dbReference type="SMART" id="SM00744">
    <property type="entry name" value="RINGv"/>
    <property type="match status" value="1"/>
</dbReference>
<dbReference type="SUPFAM" id="SSF57850">
    <property type="entry name" value="RING/U-box"/>
    <property type="match status" value="1"/>
</dbReference>
<dbReference type="PROSITE" id="PS51292">
    <property type="entry name" value="ZF_RING_CH"/>
    <property type="match status" value="1"/>
</dbReference>
<reference key="1">
    <citation type="submission" date="2006-08" db="EMBL/GenBank/DDBJ databases">
        <authorList>
            <consortium name="NIH - Mammalian Gene Collection (MGC) project"/>
        </authorList>
    </citation>
    <scope>NUCLEOTIDE SEQUENCE [LARGE SCALE MRNA]</scope>
    <source>
        <strain>Hereford</strain>
        <tissue>Uterus</tissue>
    </source>
</reference>
<organism>
    <name type="scientific">Bos taurus</name>
    <name type="common">Bovine</name>
    <dbReference type="NCBI Taxonomy" id="9913"/>
    <lineage>
        <taxon>Eukaryota</taxon>
        <taxon>Metazoa</taxon>
        <taxon>Chordata</taxon>
        <taxon>Craniata</taxon>
        <taxon>Vertebrata</taxon>
        <taxon>Euteleostomi</taxon>
        <taxon>Mammalia</taxon>
        <taxon>Eutheria</taxon>
        <taxon>Laurasiatheria</taxon>
        <taxon>Artiodactyla</taxon>
        <taxon>Ruminantia</taxon>
        <taxon>Pecora</taxon>
        <taxon>Bovidae</taxon>
        <taxon>Bovinae</taxon>
        <taxon>Bos</taxon>
    </lineage>
</organism>
<evidence type="ECO:0000250" key="1">
    <source>
        <dbReference type="UniProtKB" id="Q5T0T0"/>
    </source>
</evidence>
<evidence type="ECO:0000255" key="2"/>
<evidence type="ECO:0000255" key="3">
    <source>
        <dbReference type="PROSITE-ProRule" id="PRU00623"/>
    </source>
</evidence>
<evidence type="ECO:0000256" key="4">
    <source>
        <dbReference type="SAM" id="MobiDB-lite"/>
    </source>
</evidence>
<evidence type="ECO:0000305" key="5"/>
<proteinExistence type="evidence at transcript level"/>
<keyword id="KW-1064">Adaptive immunity</keyword>
<keyword id="KW-0968">Cytoplasmic vesicle</keyword>
<keyword id="KW-0256">Endoplasmic reticulum</keyword>
<keyword id="KW-0967">Endosome</keyword>
<keyword id="KW-0333">Golgi apparatus</keyword>
<keyword id="KW-0391">Immunity</keyword>
<keyword id="KW-0458">Lysosome</keyword>
<keyword id="KW-0472">Membrane</keyword>
<keyword id="KW-0479">Metal-binding</keyword>
<keyword id="KW-1185">Reference proteome</keyword>
<keyword id="KW-0808">Transferase</keyword>
<keyword id="KW-0812">Transmembrane</keyword>
<keyword id="KW-1133">Transmembrane helix</keyword>
<keyword id="KW-0833">Ubl conjugation pathway</keyword>
<keyword id="KW-0862">Zinc</keyword>
<keyword id="KW-0863">Zinc-finger</keyword>
<accession>Q0VD59</accession>
<feature type="chain" id="PRO_0000274369" description="E3 ubiquitin-protein ligase MARCHF8">
    <location>
        <begin position="1"/>
        <end position="289"/>
    </location>
</feature>
<feature type="transmembrane region" description="Helical" evidence="2">
    <location>
        <begin position="155"/>
        <end position="175"/>
    </location>
</feature>
<feature type="transmembrane region" description="Helical" evidence="2">
    <location>
        <begin position="195"/>
        <end position="215"/>
    </location>
</feature>
<feature type="zinc finger region" description="RING-CH-type" evidence="3">
    <location>
        <begin position="70"/>
        <end position="131"/>
    </location>
</feature>
<feature type="region of interest" description="Disordered" evidence="4">
    <location>
        <begin position="1"/>
        <end position="68"/>
    </location>
</feature>
<feature type="compositionally biased region" description="Basic and acidic residues" evidence="4">
    <location>
        <begin position="25"/>
        <end position="39"/>
    </location>
</feature>
<feature type="compositionally biased region" description="Low complexity" evidence="4">
    <location>
        <begin position="50"/>
        <end position="64"/>
    </location>
</feature>
<feature type="binding site" evidence="3">
    <location>
        <position position="78"/>
    </location>
    <ligand>
        <name>Zn(2+)</name>
        <dbReference type="ChEBI" id="CHEBI:29105"/>
        <label>1</label>
    </ligand>
</feature>
<feature type="binding site" evidence="3">
    <location>
        <position position="81"/>
    </location>
    <ligand>
        <name>Zn(2+)</name>
        <dbReference type="ChEBI" id="CHEBI:29105"/>
        <label>1</label>
    </ligand>
</feature>
<feature type="binding site" evidence="3">
    <location>
        <position position="95"/>
    </location>
    <ligand>
        <name>Zn(2+)</name>
        <dbReference type="ChEBI" id="CHEBI:29105"/>
        <label>2</label>
    </ligand>
</feature>
<feature type="binding site" evidence="3">
    <location>
        <position position="97"/>
    </location>
    <ligand>
        <name>Zn(2+)</name>
        <dbReference type="ChEBI" id="CHEBI:29105"/>
        <label>2</label>
    </ligand>
</feature>
<feature type="binding site" evidence="3">
    <location>
        <position position="105"/>
    </location>
    <ligand>
        <name>Zn(2+)</name>
        <dbReference type="ChEBI" id="CHEBI:29105"/>
        <label>1</label>
    </ligand>
</feature>
<feature type="binding site" evidence="3">
    <location>
        <position position="108"/>
    </location>
    <ligand>
        <name>Zn(2+)</name>
        <dbReference type="ChEBI" id="CHEBI:29105"/>
        <label>1</label>
    </ligand>
</feature>
<feature type="binding site" evidence="3">
    <location>
        <position position="121"/>
    </location>
    <ligand>
        <name>Zn(2+)</name>
        <dbReference type="ChEBI" id="CHEBI:29105"/>
        <label>2</label>
    </ligand>
</feature>
<feature type="binding site" evidence="3">
    <location>
        <position position="124"/>
    </location>
    <ligand>
        <name>Zn(2+)</name>
        <dbReference type="ChEBI" id="CHEBI:29105"/>
        <label>2</label>
    </ligand>
</feature>
<comment type="function">
    <text evidence="1">E3 ubiquitin-protein ligase that plays several important roles in innate immunity and adaptive immunity. Mediates ubiquitination of CD86 and MHC class II proteins, such as HLA-DR alpha and beta, and promotes their subsequent endocytosis and sorting to lysosomes via multivesicular bodies. Possesses a very broad antiviral activity by specifically inactivating different viral fusion proteins. Targets and ubiquitinates cytoplasmic lysine residues of viral envelope glycoproteins with single transmembrane domains leading to their lysosomal degradation. Mediates the regulation of constitutive ubiquitination and trafficking of the viral restriction factor BST2 within the endocytic pathway. Plays a role in maintenance of immune tolerance to self by promoting the turnover and proteasomal degradation of PD-L1/CD274 via ubiquitination. Catalyzes the 'Lys-63'-linked polyubiquitylation of cGAS thereby inhibiting its DNA binding ability and impairing its antiviral innate immunity. Negatively regulates IL7-mediated T-cell homeostasis by mediating 'Lys-27'-linked polyubiquitination of IL7R, leading to its lysosomal degradation.</text>
</comment>
<comment type="catalytic activity">
    <reaction evidence="1">
        <text>S-ubiquitinyl-[E2 ubiquitin-conjugating enzyme]-L-cysteine + [acceptor protein]-L-lysine = [E2 ubiquitin-conjugating enzyme]-L-cysteine + N(6)-ubiquitinyl-[acceptor protein]-L-lysine.</text>
        <dbReference type="EC" id="2.3.2.27"/>
    </reaction>
</comment>
<comment type="pathway">
    <text evidence="1">Protein modification; protein ubiquitination.</text>
</comment>
<comment type="subunit">
    <text evidence="1">Interacts with CD86.</text>
</comment>
<comment type="subcellular location">
    <subcellularLocation>
        <location evidence="1">Golgi apparatus membrane</location>
    </subcellularLocation>
    <subcellularLocation>
        <location evidence="1">Endoplasmic reticulum membrane</location>
    </subcellularLocation>
    <subcellularLocation>
        <location evidence="1">Cytoplasmic vesicle membrane</location>
        <topology evidence="2">Multi-pass membrane protein</topology>
    </subcellularLocation>
    <subcellularLocation>
        <location evidence="1">Lysosome membrane</location>
        <topology evidence="2">Multi-pass membrane protein</topology>
    </subcellularLocation>
    <subcellularLocation>
        <location evidence="1">Early endosome membrane</location>
        <topology evidence="2">Multi-pass membrane protein</topology>
    </subcellularLocation>
</comment>
<comment type="domain">
    <text evidence="3">The RING-CH-type zinc finger domain is required for E3 ligase activity.</text>
</comment>
<name>MARH8_BOVIN</name>